<comment type="function">
    <text evidence="1">Nitrososynthase involved in the biosynthesis of baumycin (PubMed:23885759). Catalyzes the double-oxidation of TDP-L-epi-vancosamine to TDP-L-epi-vancosonitrose (PubMed:23885759). The rapid turnover of TDP-L-epi-vancosamine suggests that this compound, or a closely related analog, is the natural substrate for DnmZ (PubMed:23885759). Can also catalyze the double-oxidation of TDP-L-evernosamine to TDP-L-evernitrosose (PubMed:23885759).</text>
</comment>
<comment type="cofactor">
    <cofactor evidence="1">
        <name>FAD</name>
        <dbReference type="ChEBI" id="CHEBI:57692"/>
    </cofactor>
</comment>
<comment type="pathway">
    <text evidence="5">Antibiotic biosynthesis.</text>
</comment>
<comment type="subunit">
    <text evidence="2">Homotetramer.</text>
</comment>
<comment type="similarity">
    <text evidence="4">Belongs to the acyl-CoA dehydrogenase family.</text>
</comment>
<organism>
    <name type="scientific">Streptomyces peucetius</name>
    <dbReference type="NCBI Taxonomy" id="1950"/>
    <lineage>
        <taxon>Bacteria</taxon>
        <taxon>Bacillati</taxon>
        <taxon>Actinomycetota</taxon>
        <taxon>Actinomycetes</taxon>
        <taxon>Kitasatosporales</taxon>
        <taxon>Streptomycetaceae</taxon>
        <taxon>Streptomyces</taxon>
    </lineage>
</organism>
<sequence length="405" mass="43181">MTKPSVHEHPGVLADNGLCEPKTPAGRRLLDLLERYLPALEAESRDNDREATLPVHLFDRMRKEGVLGATVPEDLGGLGVHSLHDVALALARIAGRDAGVALALHMQFSRGLTLDFEWRHGAPSTRPLAEDLLRQMGAGEAVICGAVKDVRGTTVLTRATDGSYRLNGRKTLVSMAGIATHYVVSTRLEEAGAPVRLAAPVVARTTPGLTVLDNWDGMGMRSSGSVDIVFDGCPVDRDRVLPRGEPGVRDDAALAGQTVSSIAMLGIYVGIAEAARRIALTELRRRGGAPAGVRTTVAEIDARLFALHTAVASALTTADRLADDLSGDLAARGRAMMTPFQYAKLLVNRHSVGVVDDCLMLVGGAGYSNSHPLARLYRDVRAGGFMHPYNFTDGVDYLSEVALGR</sequence>
<accession>A0A0R4I990</accession>
<protein>
    <recommendedName>
        <fullName evidence="3">Amino sugar nitrososynthase DnmZ</fullName>
        <ecNumber evidence="1">1.14.13.-</ecNumber>
    </recommendedName>
</protein>
<gene>
    <name evidence="3" type="primary">dnmZ</name>
</gene>
<proteinExistence type="evidence at protein level"/>
<evidence type="ECO:0000269" key="1">
    <source>
    </source>
</evidence>
<evidence type="ECO:0000269" key="2">
    <source>
    </source>
</evidence>
<evidence type="ECO:0000303" key="3">
    <source>
    </source>
</evidence>
<evidence type="ECO:0000305" key="4"/>
<evidence type="ECO:0000305" key="5">
    <source>
    </source>
</evidence>
<evidence type="ECO:0007744" key="6">
    <source>
        <dbReference type="PDB" id="4ZXV"/>
    </source>
</evidence>
<evidence type="ECO:0007744" key="7">
    <source>
        <dbReference type="PDB" id="4ZYJ"/>
    </source>
</evidence>
<evidence type="ECO:0007829" key="8">
    <source>
        <dbReference type="PDB" id="4ZXV"/>
    </source>
</evidence>
<evidence type="ECO:0007829" key="9">
    <source>
        <dbReference type="PDB" id="4ZYJ"/>
    </source>
</evidence>
<keyword id="KW-0002">3D-structure</keyword>
<keyword id="KW-0045">Antibiotic biosynthesis</keyword>
<keyword id="KW-0274">FAD</keyword>
<keyword id="KW-0285">Flavoprotein</keyword>
<keyword id="KW-0503">Monooxygenase</keyword>
<keyword id="KW-0560">Oxidoreductase</keyword>
<dbReference type="EC" id="1.14.13.-" evidence="1"/>
<dbReference type="PDB" id="4ZXV">
    <property type="method" value="X-ray"/>
    <property type="resolution" value="3.00 A"/>
    <property type="chains" value="A/B/C/D=1-405"/>
</dbReference>
<dbReference type="PDB" id="4ZYJ">
    <property type="method" value="X-ray"/>
    <property type="resolution" value="2.74 A"/>
    <property type="chains" value="A/B/C/D=1-405"/>
</dbReference>
<dbReference type="PDBsum" id="4ZXV"/>
<dbReference type="PDBsum" id="4ZYJ"/>
<dbReference type="SMR" id="A0A0R4I990"/>
<dbReference type="BRENDA" id="1.14.13.187">
    <property type="organism ID" value="6073"/>
</dbReference>
<dbReference type="EvolutionaryTrace" id="A0A0R4I990"/>
<dbReference type="GO" id="GO:0003995">
    <property type="term" value="F:acyl-CoA dehydrogenase activity"/>
    <property type="evidence" value="ECO:0007669"/>
    <property type="project" value="TreeGrafter"/>
</dbReference>
<dbReference type="GO" id="GO:0050660">
    <property type="term" value="F:flavin adenine dinucleotide binding"/>
    <property type="evidence" value="ECO:0007669"/>
    <property type="project" value="InterPro"/>
</dbReference>
<dbReference type="GO" id="GO:0004497">
    <property type="term" value="F:monooxygenase activity"/>
    <property type="evidence" value="ECO:0007669"/>
    <property type="project" value="UniProtKB-KW"/>
</dbReference>
<dbReference type="GO" id="GO:0017000">
    <property type="term" value="P:antibiotic biosynthetic process"/>
    <property type="evidence" value="ECO:0007669"/>
    <property type="project" value="UniProtKB-KW"/>
</dbReference>
<dbReference type="CDD" id="cd00567">
    <property type="entry name" value="ACAD"/>
    <property type="match status" value="1"/>
</dbReference>
<dbReference type="Gene3D" id="1.10.540.10">
    <property type="entry name" value="Acyl-CoA dehydrogenase/oxidase, N-terminal domain"/>
    <property type="match status" value="1"/>
</dbReference>
<dbReference type="Gene3D" id="2.40.110.10">
    <property type="entry name" value="Butyryl-CoA Dehydrogenase, subunit A, domain 2"/>
    <property type="match status" value="1"/>
</dbReference>
<dbReference type="Gene3D" id="1.20.140.10">
    <property type="entry name" value="Butyryl-CoA Dehydrogenase, subunit A, domain 3"/>
    <property type="match status" value="1"/>
</dbReference>
<dbReference type="InterPro" id="IPR006091">
    <property type="entry name" value="Acyl-CoA_Oxase/DH_mid-dom"/>
</dbReference>
<dbReference type="InterPro" id="IPR046373">
    <property type="entry name" value="Acyl-CoA_Oxase/DH_mid-dom_sf"/>
</dbReference>
<dbReference type="InterPro" id="IPR036250">
    <property type="entry name" value="AcylCo_DH-like_C"/>
</dbReference>
<dbReference type="InterPro" id="IPR009075">
    <property type="entry name" value="AcylCo_DH/oxidase_C"/>
</dbReference>
<dbReference type="InterPro" id="IPR013786">
    <property type="entry name" value="AcylCoA_DH/ox_N"/>
</dbReference>
<dbReference type="InterPro" id="IPR037069">
    <property type="entry name" value="AcylCoA_DH/ox_N_sf"/>
</dbReference>
<dbReference type="InterPro" id="IPR009100">
    <property type="entry name" value="AcylCoA_DH/oxidase_NM_dom_sf"/>
</dbReference>
<dbReference type="PANTHER" id="PTHR43884">
    <property type="entry name" value="ACYL-COA DEHYDROGENASE"/>
    <property type="match status" value="1"/>
</dbReference>
<dbReference type="PANTHER" id="PTHR43884:SF25">
    <property type="entry name" value="ACYL-COA DEHYDROGENASE YDBM-RELATED"/>
    <property type="match status" value="1"/>
</dbReference>
<dbReference type="Pfam" id="PF00441">
    <property type="entry name" value="Acyl-CoA_dh_1"/>
    <property type="match status" value="1"/>
</dbReference>
<dbReference type="Pfam" id="PF02770">
    <property type="entry name" value="Acyl-CoA_dh_M"/>
    <property type="match status" value="1"/>
</dbReference>
<dbReference type="Pfam" id="PF02771">
    <property type="entry name" value="Acyl-CoA_dh_N"/>
    <property type="match status" value="1"/>
</dbReference>
<dbReference type="PIRSF" id="PIRSF016578">
    <property type="entry name" value="HsaA"/>
    <property type="match status" value="1"/>
</dbReference>
<dbReference type="SUPFAM" id="SSF47203">
    <property type="entry name" value="Acyl-CoA dehydrogenase C-terminal domain-like"/>
    <property type="match status" value="1"/>
</dbReference>
<dbReference type="SUPFAM" id="SSF56645">
    <property type="entry name" value="Acyl-CoA dehydrogenase NM domain-like"/>
    <property type="match status" value="1"/>
</dbReference>
<feature type="chain" id="PRO_0000458253" description="Amino sugar nitrososynthase DnmZ">
    <location>
        <begin position="1"/>
        <end position="405"/>
    </location>
</feature>
<feature type="binding site" evidence="2 7">
    <location>
        <position position="117"/>
    </location>
    <ligand>
        <name>dTDP</name>
        <dbReference type="ChEBI" id="CHEBI:58369"/>
    </ligand>
</feature>
<feature type="binding site" evidence="2 7">
    <location>
        <position position="332"/>
    </location>
    <ligand>
        <name>dTDP</name>
        <dbReference type="ChEBI" id="CHEBI:58369"/>
    </ligand>
</feature>
<feature type="strand" evidence="9">
    <location>
        <begin position="17"/>
        <end position="20"/>
    </location>
</feature>
<feature type="helix" evidence="9">
    <location>
        <begin position="24"/>
        <end position="34"/>
    </location>
</feature>
<feature type="helix" evidence="9">
    <location>
        <begin position="37"/>
        <end position="50"/>
    </location>
</feature>
<feature type="helix" evidence="9">
    <location>
        <begin position="55"/>
        <end position="63"/>
    </location>
</feature>
<feature type="helix" evidence="9">
    <location>
        <begin position="66"/>
        <end position="68"/>
    </location>
</feature>
<feature type="helix" evidence="9">
    <location>
        <begin position="73"/>
        <end position="75"/>
    </location>
</feature>
<feature type="helix" evidence="9">
    <location>
        <begin position="83"/>
        <end position="94"/>
    </location>
</feature>
<feature type="helix" evidence="9">
    <location>
        <begin position="98"/>
        <end position="120"/>
    </location>
</feature>
<feature type="turn" evidence="9">
    <location>
        <begin position="123"/>
        <end position="125"/>
    </location>
</feature>
<feature type="helix" evidence="9">
    <location>
        <begin position="126"/>
        <end position="137"/>
    </location>
</feature>
<feature type="strand" evidence="9">
    <location>
        <begin position="143"/>
        <end position="146"/>
    </location>
</feature>
<feature type="strand" evidence="9">
    <location>
        <begin position="155"/>
        <end position="157"/>
    </location>
</feature>
<feature type="strand" evidence="9">
    <location>
        <begin position="164"/>
        <end position="173"/>
    </location>
</feature>
<feature type="helix" evidence="9">
    <location>
        <begin position="176"/>
        <end position="178"/>
    </location>
</feature>
<feature type="strand" evidence="9">
    <location>
        <begin position="180"/>
        <end position="184"/>
    </location>
</feature>
<feature type="strand" evidence="9">
    <location>
        <begin position="186"/>
        <end position="189"/>
    </location>
</feature>
<feature type="strand" evidence="9">
    <location>
        <begin position="196"/>
        <end position="203"/>
    </location>
</feature>
<feature type="strand" evidence="9">
    <location>
        <begin position="209"/>
        <end position="212"/>
    </location>
</feature>
<feature type="strand" evidence="9">
    <location>
        <begin position="217"/>
        <end position="219"/>
    </location>
</feature>
<feature type="helix" evidence="9">
    <location>
        <begin position="221"/>
        <end position="223"/>
    </location>
</feature>
<feature type="strand" evidence="9">
    <location>
        <begin position="226"/>
        <end position="235"/>
    </location>
</feature>
<feature type="helix" evidence="9">
    <location>
        <begin position="237"/>
        <end position="239"/>
    </location>
</feature>
<feature type="strand" evidence="9">
    <location>
        <begin position="240"/>
        <end position="243"/>
    </location>
</feature>
<feature type="strand" evidence="8">
    <location>
        <begin position="246"/>
        <end position="248"/>
    </location>
</feature>
<feature type="helix" evidence="9">
    <location>
        <begin position="251"/>
        <end position="253"/>
    </location>
</feature>
<feature type="helix" evidence="9">
    <location>
        <begin position="254"/>
        <end position="259"/>
    </location>
</feature>
<feature type="helix" evidence="9">
    <location>
        <begin position="262"/>
        <end position="264"/>
    </location>
</feature>
<feature type="helix" evidence="9">
    <location>
        <begin position="265"/>
        <end position="286"/>
    </location>
</feature>
<feature type="helix" evidence="9">
    <location>
        <begin position="291"/>
        <end position="322"/>
    </location>
</feature>
<feature type="helix" evidence="9">
    <location>
        <begin position="329"/>
        <end position="362"/>
    </location>
</feature>
<feature type="helix" evidence="9">
    <location>
        <begin position="364"/>
        <end position="367"/>
    </location>
</feature>
<feature type="helix" evidence="9">
    <location>
        <begin position="372"/>
        <end position="379"/>
    </location>
</feature>
<feature type="helix" evidence="9">
    <location>
        <begin position="380"/>
        <end position="385"/>
    </location>
</feature>
<feature type="helix" evidence="9">
    <location>
        <begin position="391"/>
        <end position="403"/>
    </location>
</feature>
<reference evidence="6 7" key="1">
    <citation type="journal article" date="2015" name="Acta Crystallogr. F Struct. Biol. Commun.">
        <title>Structure of DnmZ, a nitrososynthase in the Streptomyces peucetius anthracycline biosynthetic pathway.</title>
        <authorList>
            <person name="Sartor L."/>
            <person name="Ibarra C."/>
            <person name="Al-Mestarihi A."/>
            <person name="Bachmann B.O."/>
            <person name="Vey J.L."/>
        </authorList>
    </citation>
    <scope>NUCLEOTIDE SEQUENCE [GENOMIC DNA]</scope>
    <scope>X-RAY CRYSTALLOGRAPHY (2.74 ANGSTROMS) OF APOENZYME AND IN COMPLEX WITH DTDP</scope>
    <scope>SUBUNIT</scope>
</reference>
<reference key="2">
    <citation type="journal article" date="2013" name="J. Am. Chem. Soc.">
        <title>Nitrososynthase-triggered oxidative carbon-carbon bond cleavage in baumycin biosynthesis.</title>
        <authorList>
            <person name="Al-Mestarihi A."/>
            <person name="Romo A."/>
            <person name="Liu H.W."/>
            <person name="Bachmann B.O."/>
        </authorList>
    </citation>
    <scope>FUNCTION AS A NITROSYNTHASE</scope>
    <scope>COFACTOR</scope>
    <source>
        <strain>ATCC 29050 / DSM 40754 / JCM 9920 / NBRC 100596 / NCIMB 10972</strain>
    </source>
</reference>
<name>NITSS_STRPE</name>